<dbReference type="EMBL" id="BA000035">
    <property type="protein sequence ID" value="BAC18482.1"/>
    <property type="molecule type" value="Genomic_DNA"/>
</dbReference>
<dbReference type="RefSeq" id="WP_006767673.1">
    <property type="nucleotide sequence ID" value="NC_004369.1"/>
</dbReference>
<dbReference type="SMR" id="Q8FT98"/>
<dbReference type="STRING" id="196164.gene:10742093"/>
<dbReference type="KEGG" id="cef:CE1672"/>
<dbReference type="eggNOG" id="COG3237">
    <property type="taxonomic scope" value="Bacteria"/>
</dbReference>
<dbReference type="HOGENOM" id="CLU_135567_1_2_11"/>
<dbReference type="OrthoDB" id="2143260at2"/>
<dbReference type="Proteomes" id="UP000001409">
    <property type="component" value="Chromosome"/>
</dbReference>
<dbReference type="Gene3D" id="1.10.1470.10">
    <property type="entry name" value="YjbJ"/>
    <property type="match status" value="1"/>
</dbReference>
<dbReference type="InterPro" id="IPR008462">
    <property type="entry name" value="CsbD"/>
</dbReference>
<dbReference type="InterPro" id="IPR036629">
    <property type="entry name" value="YjbJ_sf"/>
</dbReference>
<dbReference type="Pfam" id="PF05532">
    <property type="entry name" value="CsbD"/>
    <property type="match status" value="1"/>
</dbReference>
<dbReference type="SUPFAM" id="SSF69047">
    <property type="entry name" value="Hypothetical protein YjbJ"/>
    <property type="match status" value="1"/>
</dbReference>
<sequence>MGLGDKIRNTAEKASGKVKEATGKATDNEKLEAEGKTDQFKGNAKNTVENAKDTLRGN</sequence>
<keyword id="KW-1185">Reference proteome</keyword>
<feature type="chain" id="PRO_0000209998" description="UPF0337 protein CE1672">
    <location>
        <begin position="1"/>
        <end position="58"/>
    </location>
</feature>
<feature type="region of interest" description="Disordered" evidence="1">
    <location>
        <begin position="1"/>
        <end position="58"/>
    </location>
</feature>
<feature type="compositionally biased region" description="Basic and acidic residues" evidence="1">
    <location>
        <begin position="1"/>
        <end position="39"/>
    </location>
</feature>
<organism>
    <name type="scientific">Corynebacterium efficiens (strain DSM 44549 / YS-314 / AJ 12310 / JCM 11189 / NBRC 100395)</name>
    <dbReference type="NCBI Taxonomy" id="196164"/>
    <lineage>
        <taxon>Bacteria</taxon>
        <taxon>Bacillati</taxon>
        <taxon>Actinomycetota</taxon>
        <taxon>Actinomycetes</taxon>
        <taxon>Mycobacteriales</taxon>
        <taxon>Corynebacteriaceae</taxon>
        <taxon>Corynebacterium</taxon>
    </lineage>
</organism>
<proteinExistence type="inferred from homology"/>
<reference key="1">
    <citation type="journal article" date="2003" name="Genome Res.">
        <title>Comparative complete genome sequence analysis of the amino acid replacements responsible for the thermostability of Corynebacterium efficiens.</title>
        <authorList>
            <person name="Nishio Y."/>
            <person name="Nakamura Y."/>
            <person name="Kawarabayasi Y."/>
            <person name="Usuda Y."/>
            <person name="Kimura E."/>
            <person name="Sugimoto S."/>
            <person name="Matsui K."/>
            <person name="Yamagishi A."/>
            <person name="Kikuchi H."/>
            <person name="Ikeo K."/>
            <person name="Gojobori T."/>
        </authorList>
    </citation>
    <scope>NUCLEOTIDE SEQUENCE [LARGE SCALE GENOMIC DNA]</scope>
    <source>
        <strain>DSM 44549 / YS-314 / AJ 12310 / JCM 11189 / NBRC 100395</strain>
    </source>
</reference>
<evidence type="ECO:0000256" key="1">
    <source>
        <dbReference type="SAM" id="MobiDB-lite"/>
    </source>
</evidence>
<evidence type="ECO:0000305" key="2"/>
<gene>
    <name type="ordered locus">CE1672</name>
</gene>
<protein>
    <recommendedName>
        <fullName>UPF0337 protein CE1672</fullName>
    </recommendedName>
</protein>
<name>Y1672_COREF</name>
<comment type="similarity">
    <text evidence="2">Belongs to the UPF0337 (CsbD) family.</text>
</comment>
<accession>Q8FT98</accession>